<keyword id="KW-1185">Reference proteome</keyword>
<keyword id="KW-0687">Ribonucleoprotein</keyword>
<keyword id="KW-0689">Ribosomal protein</keyword>
<comment type="similarity">
    <text evidence="1">Belongs to the bacterial ribosomal protein bL34 family.</text>
</comment>
<organism>
    <name type="scientific">Acidithiobacillus ferrooxidans (strain ATCC 23270 / DSM 14882 / CIP 104768 / NCIMB 8455)</name>
    <name type="common">Ferrobacillus ferrooxidans (strain ATCC 23270)</name>
    <dbReference type="NCBI Taxonomy" id="243159"/>
    <lineage>
        <taxon>Bacteria</taxon>
        <taxon>Pseudomonadati</taxon>
        <taxon>Pseudomonadota</taxon>
        <taxon>Acidithiobacillia</taxon>
        <taxon>Acidithiobacillales</taxon>
        <taxon>Acidithiobacillaceae</taxon>
        <taxon>Acidithiobacillus</taxon>
    </lineage>
</organism>
<evidence type="ECO:0000255" key="1">
    <source>
        <dbReference type="HAMAP-Rule" id="MF_00391"/>
    </source>
</evidence>
<evidence type="ECO:0000305" key="2"/>
<dbReference type="EMBL" id="CP001219">
    <property type="protein sequence ID" value="ACK80267.1"/>
    <property type="molecule type" value="Genomic_DNA"/>
</dbReference>
<dbReference type="RefSeq" id="WP_009560916.1">
    <property type="nucleotide sequence ID" value="NC_011761.1"/>
</dbReference>
<dbReference type="SMR" id="B7J3D6"/>
<dbReference type="STRING" id="243159.AFE_0035"/>
<dbReference type="PaxDb" id="243159-AFE_0035"/>
<dbReference type="GeneID" id="89661775"/>
<dbReference type="KEGG" id="afr:AFE_0035"/>
<dbReference type="eggNOG" id="COG0230">
    <property type="taxonomic scope" value="Bacteria"/>
</dbReference>
<dbReference type="HOGENOM" id="CLU_129938_2_0_6"/>
<dbReference type="Proteomes" id="UP000001362">
    <property type="component" value="Chromosome"/>
</dbReference>
<dbReference type="GO" id="GO:1990904">
    <property type="term" value="C:ribonucleoprotein complex"/>
    <property type="evidence" value="ECO:0007669"/>
    <property type="project" value="UniProtKB-KW"/>
</dbReference>
<dbReference type="GO" id="GO:0005840">
    <property type="term" value="C:ribosome"/>
    <property type="evidence" value="ECO:0007669"/>
    <property type="project" value="UniProtKB-KW"/>
</dbReference>
<dbReference type="GO" id="GO:0003735">
    <property type="term" value="F:structural constituent of ribosome"/>
    <property type="evidence" value="ECO:0007669"/>
    <property type="project" value="InterPro"/>
</dbReference>
<dbReference type="GO" id="GO:0006412">
    <property type="term" value="P:translation"/>
    <property type="evidence" value="ECO:0007669"/>
    <property type="project" value="UniProtKB-UniRule"/>
</dbReference>
<dbReference type="FunFam" id="1.10.287.3980:FF:000001">
    <property type="entry name" value="Mitochondrial ribosomal protein L34"/>
    <property type="match status" value="1"/>
</dbReference>
<dbReference type="Gene3D" id="1.10.287.3980">
    <property type="match status" value="1"/>
</dbReference>
<dbReference type="HAMAP" id="MF_00391">
    <property type="entry name" value="Ribosomal_bL34"/>
    <property type="match status" value="1"/>
</dbReference>
<dbReference type="InterPro" id="IPR000271">
    <property type="entry name" value="Ribosomal_bL34"/>
</dbReference>
<dbReference type="InterPro" id="IPR020939">
    <property type="entry name" value="Ribosomal_bL34_CS"/>
</dbReference>
<dbReference type="NCBIfam" id="TIGR01030">
    <property type="entry name" value="rpmH_bact"/>
    <property type="match status" value="1"/>
</dbReference>
<dbReference type="PANTHER" id="PTHR14503:SF4">
    <property type="entry name" value="LARGE RIBOSOMAL SUBUNIT PROTEIN BL34M"/>
    <property type="match status" value="1"/>
</dbReference>
<dbReference type="PANTHER" id="PTHR14503">
    <property type="entry name" value="MITOCHONDRIAL RIBOSOMAL PROTEIN 34 FAMILY MEMBER"/>
    <property type="match status" value="1"/>
</dbReference>
<dbReference type="Pfam" id="PF00468">
    <property type="entry name" value="Ribosomal_L34"/>
    <property type="match status" value="1"/>
</dbReference>
<dbReference type="PROSITE" id="PS00784">
    <property type="entry name" value="RIBOSOMAL_L34"/>
    <property type="match status" value="1"/>
</dbReference>
<proteinExistence type="inferred from homology"/>
<name>RL34_ACIF2</name>
<protein>
    <recommendedName>
        <fullName evidence="1">Large ribosomal subunit protein bL34</fullName>
    </recommendedName>
    <alternativeName>
        <fullName evidence="2">50S ribosomal protein L34</fullName>
    </alternativeName>
</protein>
<gene>
    <name evidence="1" type="primary">rpmH</name>
    <name type="ordered locus">AFE_0035</name>
</gene>
<accession>B7J3D6</accession>
<reference key="1">
    <citation type="journal article" date="2008" name="BMC Genomics">
        <title>Acidithiobacillus ferrooxidans metabolism: from genome sequence to industrial applications.</title>
        <authorList>
            <person name="Valdes J."/>
            <person name="Pedroso I."/>
            <person name="Quatrini R."/>
            <person name="Dodson R.J."/>
            <person name="Tettelin H."/>
            <person name="Blake R. II"/>
            <person name="Eisen J.A."/>
            <person name="Holmes D.S."/>
        </authorList>
    </citation>
    <scope>NUCLEOTIDE SEQUENCE [LARGE SCALE GENOMIC DNA]</scope>
    <source>
        <strain>ATCC 23270 / DSM 14882 / CIP 104768 / NCIMB 8455</strain>
    </source>
</reference>
<feature type="chain" id="PRO_1000122885" description="Large ribosomal subunit protein bL34">
    <location>
        <begin position="1"/>
        <end position="44"/>
    </location>
</feature>
<sequence length="44" mass="5260">MKRTFQPSVVHRKRTHGFRARMATKSGRLVLKRRRAKGRQRLCP</sequence>